<evidence type="ECO:0000255" key="1">
    <source>
        <dbReference type="HAMAP-Rule" id="MF_00636"/>
    </source>
</evidence>
<reference key="1">
    <citation type="journal article" date="2009" name="BMC Microbiol.">
        <title>The genome sequence of Geobacter metallireducens: features of metabolism, physiology and regulation common and dissimilar to Geobacter sulfurreducens.</title>
        <authorList>
            <person name="Aklujkar M."/>
            <person name="Krushkal J."/>
            <person name="DiBartolo G."/>
            <person name="Lapidus A."/>
            <person name="Land M.L."/>
            <person name="Lovley D.R."/>
        </authorList>
    </citation>
    <scope>NUCLEOTIDE SEQUENCE [LARGE SCALE GENOMIC DNA]</scope>
    <source>
        <strain>ATCC 53774 / DSM 7210 / GS-15</strain>
    </source>
</reference>
<proteinExistence type="inferred from homology"/>
<organism>
    <name type="scientific">Geobacter metallireducens (strain ATCC 53774 / DSM 7210 / GS-15)</name>
    <dbReference type="NCBI Taxonomy" id="269799"/>
    <lineage>
        <taxon>Bacteria</taxon>
        <taxon>Pseudomonadati</taxon>
        <taxon>Thermodesulfobacteriota</taxon>
        <taxon>Desulfuromonadia</taxon>
        <taxon>Geobacterales</taxon>
        <taxon>Geobacteraceae</taxon>
        <taxon>Geobacter</taxon>
    </lineage>
</organism>
<gene>
    <name type="ordered locus">Gmet_1286</name>
</gene>
<sequence>MRVLVISGLSGSGKSTAVRVLEDEGFFCIDNLPVQLFPTIIDLVNKAQETVPGVALVMDIRGRDFLKGFEKIFQEIDDAGHTIEIIFFDATDEVLIRRFSETRRRHPALESGSVPEGIRYEREQLSGLRRLATLVIDTSELNVHQLKEMVLARVKGEAGARRMTIHLQSFGYRYGIPLESDLVMDVRFLSNPHFVPELKPLSGLDPGVRNFVLEKPETTQFLARFEGLLEYLLPAYQREGKSYLTISIGCTGGRHRSVALVEELRRFFDRAGIAVKVSHRDMEKG</sequence>
<feature type="chain" id="PRO_0000258965" description="Nucleotide-binding protein Gmet_1286">
    <location>
        <begin position="1"/>
        <end position="285"/>
    </location>
</feature>
<feature type="binding site" evidence="1">
    <location>
        <begin position="8"/>
        <end position="15"/>
    </location>
    <ligand>
        <name>ATP</name>
        <dbReference type="ChEBI" id="CHEBI:30616"/>
    </ligand>
</feature>
<feature type="binding site" evidence="1">
    <location>
        <begin position="59"/>
        <end position="62"/>
    </location>
    <ligand>
        <name>GTP</name>
        <dbReference type="ChEBI" id="CHEBI:37565"/>
    </ligand>
</feature>
<comment type="function">
    <text evidence="1">Displays ATPase and GTPase activities.</text>
</comment>
<comment type="similarity">
    <text evidence="1">Belongs to the RapZ-like family.</text>
</comment>
<protein>
    <recommendedName>
        <fullName evidence="1">Nucleotide-binding protein Gmet_1286</fullName>
    </recommendedName>
</protein>
<dbReference type="EMBL" id="CP000148">
    <property type="protein sequence ID" value="ABB31522.1"/>
    <property type="molecule type" value="Genomic_DNA"/>
</dbReference>
<dbReference type="SMR" id="Q39W52"/>
<dbReference type="STRING" id="269799.Gmet_1286"/>
<dbReference type="KEGG" id="gme:Gmet_1286"/>
<dbReference type="eggNOG" id="COG1660">
    <property type="taxonomic scope" value="Bacteria"/>
</dbReference>
<dbReference type="HOGENOM" id="CLU_059558_0_0_7"/>
<dbReference type="Proteomes" id="UP000007073">
    <property type="component" value="Chromosome"/>
</dbReference>
<dbReference type="GO" id="GO:0005524">
    <property type="term" value="F:ATP binding"/>
    <property type="evidence" value="ECO:0007669"/>
    <property type="project" value="UniProtKB-UniRule"/>
</dbReference>
<dbReference type="GO" id="GO:0005525">
    <property type="term" value="F:GTP binding"/>
    <property type="evidence" value="ECO:0007669"/>
    <property type="project" value="UniProtKB-UniRule"/>
</dbReference>
<dbReference type="Gene3D" id="3.40.50.300">
    <property type="entry name" value="P-loop containing nucleotide triphosphate hydrolases"/>
    <property type="match status" value="1"/>
</dbReference>
<dbReference type="HAMAP" id="MF_00636">
    <property type="entry name" value="RapZ_like"/>
    <property type="match status" value="1"/>
</dbReference>
<dbReference type="InterPro" id="IPR027417">
    <property type="entry name" value="P-loop_NTPase"/>
</dbReference>
<dbReference type="InterPro" id="IPR005337">
    <property type="entry name" value="RapZ-like"/>
</dbReference>
<dbReference type="InterPro" id="IPR053930">
    <property type="entry name" value="RapZ-like_N"/>
</dbReference>
<dbReference type="InterPro" id="IPR053931">
    <property type="entry name" value="RapZ_C"/>
</dbReference>
<dbReference type="NCBIfam" id="NF003828">
    <property type="entry name" value="PRK05416.1"/>
    <property type="match status" value="1"/>
</dbReference>
<dbReference type="PANTHER" id="PTHR30448">
    <property type="entry name" value="RNASE ADAPTER PROTEIN RAPZ"/>
    <property type="match status" value="1"/>
</dbReference>
<dbReference type="PANTHER" id="PTHR30448:SF0">
    <property type="entry name" value="RNASE ADAPTER PROTEIN RAPZ"/>
    <property type="match status" value="1"/>
</dbReference>
<dbReference type="Pfam" id="PF22740">
    <property type="entry name" value="PapZ_C"/>
    <property type="match status" value="1"/>
</dbReference>
<dbReference type="Pfam" id="PF03668">
    <property type="entry name" value="RapZ-like_N"/>
    <property type="match status" value="1"/>
</dbReference>
<dbReference type="PIRSF" id="PIRSF005052">
    <property type="entry name" value="P-loopkin"/>
    <property type="match status" value="1"/>
</dbReference>
<dbReference type="SUPFAM" id="SSF52540">
    <property type="entry name" value="P-loop containing nucleoside triphosphate hydrolases"/>
    <property type="match status" value="1"/>
</dbReference>
<keyword id="KW-0067">ATP-binding</keyword>
<keyword id="KW-0342">GTP-binding</keyword>
<keyword id="KW-0547">Nucleotide-binding</keyword>
<keyword id="KW-1185">Reference proteome</keyword>
<name>Y1286_GEOMG</name>
<accession>Q39W52</accession>